<proteinExistence type="evidence at transcript level"/>
<evidence type="ECO:0000250" key="1">
    <source>
        <dbReference type="UniProtKB" id="Q5VVX9"/>
    </source>
</evidence>
<evidence type="ECO:0000255" key="2">
    <source>
        <dbReference type="PROSITE-ProRule" id="PRU00388"/>
    </source>
</evidence>
<evidence type="ECO:0000255" key="3">
    <source>
        <dbReference type="PROSITE-ProRule" id="PRU10133"/>
    </source>
</evidence>
<organism>
    <name type="scientific">Macaca fascicularis</name>
    <name type="common">Crab-eating macaque</name>
    <name type="synonym">Cynomolgus monkey</name>
    <dbReference type="NCBI Taxonomy" id="9541"/>
    <lineage>
        <taxon>Eukaryota</taxon>
        <taxon>Metazoa</taxon>
        <taxon>Chordata</taxon>
        <taxon>Craniata</taxon>
        <taxon>Vertebrata</taxon>
        <taxon>Euteleostomi</taxon>
        <taxon>Mammalia</taxon>
        <taxon>Eutheria</taxon>
        <taxon>Euarchontoglires</taxon>
        <taxon>Primates</taxon>
        <taxon>Haplorrhini</taxon>
        <taxon>Catarrhini</taxon>
        <taxon>Cercopithecidae</taxon>
        <taxon>Cercopithecinae</taxon>
        <taxon>Macaca</taxon>
    </lineage>
</organism>
<name>UBE2U_MACFA</name>
<protein>
    <recommendedName>
        <fullName>Ubiquitin-conjugating enzyme E2 U</fullName>
        <ecNumber>2.3.2.23</ecNumber>
    </recommendedName>
    <alternativeName>
        <fullName>E2 ubiquitin-conjugating enzyme U</fullName>
    </alternativeName>
    <alternativeName>
        <fullName>Ubiquitin carrier protein U</fullName>
    </alternativeName>
    <alternativeName>
        <fullName>Ubiquitin-protein ligase U</fullName>
    </alternativeName>
</protein>
<sequence length="322" mass="37760">MHGRAYLLLQRDFYDLKENNYKGITARPVSEDMMEWEVEIEGLQNSVWQGLVFQLTIHFTSEYNYAPPVVKFVTIPFHPNVDPHTGQPCIDFLDNPKKWNTNYTLSSILLALQVMLSNPVLENPVNLEAARILTKDESLYRTILKLFNRPLQMKDDSQELPKDPHKCIGPTKTTSFSDYYQAWSRIATSKATEYYRTALLKDPNFIGQYYKWKKMDLQHHKEWNLKYSVIKCWLARKNRMPDEVRHSMEGIKLCPTQIPTTDEIFLESPTAINSVTNIYETEEEGWKSDTSLYENNTDEPWEEEVEDLISWINTLNTNTLED</sequence>
<reference key="1">
    <citation type="journal article" date="2002" name="BMC Genomics">
        <title>Cynomolgus monkey testicular cDNAs for discovery of novel human genes in the human genome sequence.</title>
        <authorList>
            <person name="Osada N."/>
            <person name="Hida M."/>
            <person name="Kusuda J."/>
            <person name="Tanuma R."/>
            <person name="Hirata M."/>
            <person name="Suto Y."/>
            <person name="Hirai M."/>
            <person name="Terao K."/>
            <person name="Sugano S."/>
            <person name="Hashimoto K."/>
        </authorList>
    </citation>
    <scope>NUCLEOTIDE SEQUENCE [LARGE SCALE MRNA]</scope>
    <source>
        <tissue>Testis</tissue>
    </source>
</reference>
<feature type="chain" id="PRO_0000082513" description="Ubiquitin-conjugating enzyme E2 U">
    <location>
        <begin position="1"/>
        <end position="322"/>
    </location>
</feature>
<feature type="domain" description="UBC core" evidence="2">
    <location>
        <begin position="4"/>
        <end position="153"/>
    </location>
</feature>
<feature type="active site" description="Glycyl thioester intermediate" evidence="2 3">
    <location>
        <position position="89"/>
    </location>
</feature>
<keyword id="KW-0067">ATP-binding</keyword>
<keyword id="KW-0547">Nucleotide-binding</keyword>
<keyword id="KW-1185">Reference proteome</keyword>
<keyword id="KW-0808">Transferase</keyword>
<keyword id="KW-0832">Ubl conjugation</keyword>
<keyword id="KW-0833">Ubl conjugation pathway</keyword>
<accession>Q95LM1</accession>
<dbReference type="EC" id="2.3.2.23"/>
<dbReference type="EMBL" id="AB072767">
    <property type="protein sequence ID" value="BAB69736.1"/>
    <property type="molecule type" value="mRNA"/>
</dbReference>
<dbReference type="RefSeq" id="NP_001272035.1">
    <property type="nucleotide sequence ID" value="NM_001285106.1"/>
</dbReference>
<dbReference type="RefSeq" id="XP_045245842.2">
    <property type="nucleotide sequence ID" value="XM_045389907.2"/>
</dbReference>
<dbReference type="SMR" id="Q95LM1"/>
<dbReference type="STRING" id="9541.ENSMFAP00000012521"/>
<dbReference type="GeneID" id="102126041"/>
<dbReference type="eggNOG" id="KOG0419">
    <property type="taxonomic scope" value="Eukaryota"/>
</dbReference>
<dbReference type="UniPathway" id="UPA00143"/>
<dbReference type="Proteomes" id="UP000233100">
    <property type="component" value="Unplaced"/>
</dbReference>
<dbReference type="GO" id="GO:0005524">
    <property type="term" value="F:ATP binding"/>
    <property type="evidence" value="ECO:0007669"/>
    <property type="project" value="UniProtKB-KW"/>
</dbReference>
<dbReference type="GO" id="GO:0061631">
    <property type="term" value="F:ubiquitin conjugating enzyme activity"/>
    <property type="evidence" value="ECO:0007669"/>
    <property type="project" value="UniProtKB-EC"/>
</dbReference>
<dbReference type="GO" id="GO:0016567">
    <property type="term" value="P:protein ubiquitination"/>
    <property type="evidence" value="ECO:0007669"/>
    <property type="project" value="UniProtKB-UniPathway"/>
</dbReference>
<dbReference type="CDD" id="cd23806">
    <property type="entry name" value="UBCc_UBE2U"/>
    <property type="match status" value="1"/>
</dbReference>
<dbReference type="FunFam" id="3.10.110.10:FF:000067">
    <property type="entry name" value="ubiquitin-conjugating enzyme E2 U isoform X1"/>
    <property type="match status" value="1"/>
</dbReference>
<dbReference type="Gene3D" id="3.10.110.10">
    <property type="entry name" value="Ubiquitin Conjugating Enzyme"/>
    <property type="match status" value="1"/>
</dbReference>
<dbReference type="InterPro" id="IPR050113">
    <property type="entry name" value="Ub_conjugating_enzyme"/>
</dbReference>
<dbReference type="InterPro" id="IPR000608">
    <property type="entry name" value="UBQ-conjugat_E2_core"/>
</dbReference>
<dbReference type="InterPro" id="IPR023313">
    <property type="entry name" value="UBQ-conjugating_AS"/>
</dbReference>
<dbReference type="InterPro" id="IPR016135">
    <property type="entry name" value="UBQ-conjugating_enzyme/RWD"/>
</dbReference>
<dbReference type="PANTHER" id="PTHR24067">
    <property type="entry name" value="UBIQUITIN-CONJUGATING ENZYME E2"/>
    <property type="match status" value="1"/>
</dbReference>
<dbReference type="Pfam" id="PF00179">
    <property type="entry name" value="UQ_con"/>
    <property type="match status" value="1"/>
</dbReference>
<dbReference type="SMART" id="SM00212">
    <property type="entry name" value="UBCc"/>
    <property type="match status" value="1"/>
</dbReference>
<dbReference type="SUPFAM" id="SSF54495">
    <property type="entry name" value="UBC-like"/>
    <property type="match status" value="1"/>
</dbReference>
<dbReference type="PROSITE" id="PS00183">
    <property type="entry name" value="UBC_1"/>
    <property type="match status" value="1"/>
</dbReference>
<dbReference type="PROSITE" id="PS50127">
    <property type="entry name" value="UBC_2"/>
    <property type="match status" value="1"/>
</dbReference>
<comment type="function">
    <text evidence="1">Catalyzes the covalent attachment of ubiquitin to other proteins.</text>
</comment>
<comment type="catalytic activity">
    <reaction evidence="2 3">
        <text>S-ubiquitinyl-[E1 ubiquitin-activating enzyme]-L-cysteine + [E2 ubiquitin-conjugating enzyme]-L-cysteine = [E1 ubiquitin-activating enzyme]-L-cysteine + S-ubiquitinyl-[E2 ubiquitin-conjugating enzyme]-L-cysteine.</text>
        <dbReference type="EC" id="2.3.2.23"/>
    </reaction>
</comment>
<comment type="pathway">
    <text evidence="2">Protein modification; protein ubiquitination.</text>
</comment>
<comment type="PTM">
    <text evidence="1">Autoubiquitinated in vitro in the presence of UBR5.</text>
</comment>
<comment type="similarity">
    <text evidence="2">Belongs to the ubiquitin-conjugating enzyme family.</text>
</comment>
<gene>
    <name type="primary">UBE2U</name>
    <name type="ORF">QtsA-20104</name>
</gene>